<evidence type="ECO:0000255" key="1">
    <source>
        <dbReference type="PROSITE-ProRule" id="PRU00159"/>
    </source>
</evidence>
<evidence type="ECO:0000255" key="2">
    <source>
        <dbReference type="PROSITE-ProRule" id="PRU10027"/>
    </source>
</evidence>
<evidence type="ECO:0000256" key="3">
    <source>
        <dbReference type="SAM" id="MobiDB-lite"/>
    </source>
</evidence>
<evidence type="ECO:0000305" key="4"/>
<sequence>MPAAAGDGLLGEPAAPGGDGGAEDTTRPAAACEGSFLPAWVSGVSRERLRDFQHHKRVGNYLIGSRKLGEGSFAKVREGLHVLTGEKVAIKVIDKKRAKKDTYVTKNLRREGQIQQMIRHPNITQLLDILETENSYYLVMELCPGGNLMHKIYEKKRLDEAEARRYIRQLISAVEHLHRAGVVHRDLKIENLLLDEDNNIKLIDFGLSNCAGILGYSDPFSTQCGSPAYAAPELLARKKYGPKIDVWSIGVNMYAMLTGTLPFTVEPFSLRALYQKMVDKAMNPLPTQLSTGAVNFLRSLLEPDPVKRPNIQQALANRWLNENYTGKVPCNVTYPNRISLEDLSPSVVLHMTEKLGYKNSDVINTVLSNRACHILAIYFLLNKKLERYLSGKSDIQDSICYKTQLYQIEKCRATKEPYEASLDTWTRDFEFHAVQDKKPKEQEKRGDFLHRPFSKKLDKNLPSHKQPSPSLITQLQSTKALLKDRKASKSGFPDKDSFVCRNLFRKTSDSNCVASSSMEFIPVPPPRTPRIVKKLEPHQPGPGSASILPKEEPLLLDMVRSFESVDREDHIELLSPSHHYRILSSPVSLARRNSSERTLSQGLLSGSTSPLQTPLHSTLVSFAHEEKNSPPKEEGVCSPPPVPSNGLLQPLGSPNCVKSRGRFPMMGIGQMLRKRHQSLQPSSERSLDASMSPLQPTAPSSLSFDMADGVKGQC</sequence>
<accession>O88866</accession>
<comment type="catalytic activity">
    <reaction>
        <text>L-seryl-[protein] + ATP = O-phospho-L-seryl-[protein] + ADP + H(+)</text>
        <dbReference type="Rhea" id="RHEA:17989"/>
        <dbReference type="Rhea" id="RHEA-COMP:9863"/>
        <dbReference type="Rhea" id="RHEA-COMP:11604"/>
        <dbReference type="ChEBI" id="CHEBI:15378"/>
        <dbReference type="ChEBI" id="CHEBI:29999"/>
        <dbReference type="ChEBI" id="CHEBI:30616"/>
        <dbReference type="ChEBI" id="CHEBI:83421"/>
        <dbReference type="ChEBI" id="CHEBI:456216"/>
        <dbReference type="EC" id="2.7.11.1"/>
    </reaction>
</comment>
<comment type="catalytic activity">
    <reaction>
        <text>L-threonyl-[protein] + ATP = O-phospho-L-threonyl-[protein] + ADP + H(+)</text>
        <dbReference type="Rhea" id="RHEA:46608"/>
        <dbReference type="Rhea" id="RHEA-COMP:11060"/>
        <dbReference type="Rhea" id="RHEA-COMP:11605"/>
        <dbReference type="ChEBI" id="CHEBI:15378"/>
        <dbReference type="ChEBI" id="CHEBI:30013"/>
        <dbReference type="ChEBI" id="CHEBI:30616"/>
        <dbReference type="ChEBI" id="CHEBI:61977"/>
        <dbReference type="ChEBI" id="CHEBI:456216"/>
        <dbReference type="EC" id="2.7.11.1"/>
    </reaction>
</comment>
<comment type="similarity">
    <text evidence="4">Belongs to the protein kinase superfamily. CAMK Ser/Thr protein kinase family. SNF1 subfamily.</text>
</comment>
<protein>
    <recommendedName>
        <fullName>Hormonally up-regulated neu tumor-associated kinase</fullName>
        <ecNumber>2.7.11.1</ecNumber>
    </recommendedName>
    <alternativeName>
        <fullName>Serine/threonine-protein kinase MAK-V</fullName>
    </alternativeName>
</protein>
<dbReference type="EC" id="2.7.11.1"/>
<dbReference type="EMBL" id="AF055919">
    <property type="protein sequence ID" value="AAC61489.1"/>
    <property type="molecule type" value="mRNA"/>
</dbReference>
<dbReference type="EMBL" id="AF167987">
    <property type="protein sequence ID" value="AAF35282.1"/>
    <property type="molecule type" value="mRNA"/>
</dbReference>
<dbReference type="CCDS" id="CCDS28315.1"/>
<dbReference type="RefSeq" id="NP_056570.1">
    <property type="nucleotide sequence ID" value="NM_015755.2"/>
</dbReference>
<dbReference type="SMR" id="O88866"/>
<dbReference type="BioGRID" id="205017">
    <property type="interactions" value="4"/>
</dbReference>
<dbReference type="FunCoup" id="O88866">
    <property type="interactions" value="827"/>
</dbReference>
<dbReference type="IntAct" id="O88866">
    <property type="interactions" value="3"/>
</dbReference>
<dbReference type="STRING" id="10090.ENSMUSP00000068007"/>
<dbReference type="iPTMnet" id="O88866"/>
<dbReference type="PhosphoSitePlus" id="O88866"/>
<dbReference type="PaxDb" id="10090-ENSMUSP00000068007"/>
<dbReference type="ProteomicsDB" id="273203"/>
<dbReference type="Antibodypedia" id="6820">
    <property type="antibodies" value="352 antibodies from 31 providers"/>
</dbReference>
<dbReference type="DNASU" id="26559"/>
<dbReference type="Ensembl" id="ENSMUST00000065856.8">
    <property type="protein sequence ID" value="ENSMUSP00000068007.7"/>
    <property type="gene ID" value="ENSMUSG00000053414.9"/>
</dbReference>
<dbReference type="GeneID" id="26559"/>
<dbReference type="KEGG" id="mmu:26559"/>
<dbReference type="UCSC" id="uc007zwi.1">
    <property type="organism name" value="mouse"/>
</dbReference>
<dbReference type="AGR" id="MGI:1347352"/>
<dbReference type="CTD" id="30811"/>
<dbReference type="MGI" id="MGI:1347352">
    <property type="gene designation" value="Hunk"/>
</dbReference>
<dbReference type="VEuPathDB" id="HostDB:ENSMUSG00000053414"/>
<dbReference type="eggNOG" id="KOG0583">
    <property type="taxonomic scope" value="Eukaryota"/>
</dbReference>
<dbReference type="GeneTree" id="ENSGT00940000161070"/>
<dbReference type="HOGENOM" id="CLU_017161_0_0_1"/>
<dbReference type="InParanoid" id="O88866"/>
<dbReference type="OMA" id="HQYRMLS"/>
<dbReference type="OrthoDB" id="193931at2759"/>
<dbReference type="PhylomeDB" id="O88866"/>
<dbReference type="TreeFam" id="TF352373"/>
<dbReference type="BRENDA" id="2.7.11.1">
    <property type="organism ID" value="3474"/>
</dbReference>
<dbReference type="BioGRID-ORCS" id="26559">
    <property type="hits" value="3 hits in 79 CRISPR screens"/>
</dbReference>
<dbReference type="ChiTaRS" id="Hunk">
    <property type="organism name" value="mouse"/>
</dbReference>
<dbReference type="PRO" id="PR:O88866"/>
<dbReference type="Proteomes" id="UP000000589">
    <property type="component" value="Chromosome 16"/>
</dbReference>
<dbReference type="RNAct" id="O88866">
    <property type="molecule type" value="protein"/>
</dbReference>
<dbReference type="Bgee" id="ENSMUSG00000053414">
    <property type="expression patterns" value="Expressed in epithelium of cochlear duct and 224 other cell types or tissues"/>
</dbReference>
<dbReference type="ExpressionAtlas" id="O88866">
    <property type="expression patterns" value="baseline and differential"/>
</dbReference>
<dbReference type="GO" id="GO:0005524">
    <property type="term" value="F:ATP binding"/>
    <property type="evidence" value="ECO:0007669"/>
    <property type="project" value="UniProtKB-KW"/>
</dbReference>
<dbReference type="GO" id="GO:0004672">
    <property type="term" value="F:protein kinase activity"/>
    <property type="evidence" value="ECO:0000314"/>
    <property type="project" value="MGI"/>
</dbReference>
<dbReference type="GO" id="GO:0106310">
    <property type="term" value="F:protein serine kinase activity"/>
    <property type="evidence" value="ECO:0007669"/>
    <property type="project" value="RHEA"/>
</dbReference>
<dbReference type="GO" id="GO:0004674">
    <property type="term" value="F:protein serine/threonine kinase activity"/>
    <property type="evidence" value="ECO:0007669"/>
    <property type="project" value="UniProtKB-KW"/>
</dbReference>
<dbReference type="CDD" id="cd14070">
    <property type="entry name" value="STKc_HUNK"/>
    <property type="match status" value="1"/>
</dbReference>
<dbReference type="FunFam" id="1.10.510.10:FF:000391">
    <property type="entry name" value="Hormonally up-regulated neu tumor-associated kinase"/>
    <property type="match status" value="1"/>
</dbReference>
<dbReference type="FunFam" id="3.30.200.20:FF:000003">
    <property type="entry name" value="Non-specific serine/threonine protein kinase"/>
    <property type="match status" value="1"/>
</dbReference>
<dbReference type="Gene3D" id="1.10.510.10">
    <property type="entry name" value="Transferase(Phosphotransferase) domain 1"/>
    <property type="match status" value="1"/>
</dbReference>
<dbReference type="InterPro" id="IPR034671">
    <property type="entry name" value="Hunk"/>
</dbReference>
<dbReference type="InterPro" id="IPR011009">
    <property type="entry name" value="Kinase-like_dom_sf"/>
</dbReference>
<dbReference type="InterPro" id="IPR000719">
    <property type="entry name" value="Prot_kinase_dom"/>
</dbReference>
<dbReference type="InterPro" id="IPR017441">
    <property type="entry name" value="Protein_kinase_ATP_BS"/>
</dbReference>
<dbReference type="InterPro" id="IPR008271">
    <property type="entry name" value="Ser/Thr_kinase_AS"/>
</dbReference>
<dbReference type="PANTHER" id="PTHR24346:SF80">
    <property type="entry name" value="HORMONALLY UP-REGULATED NEU TUMOR-ASSOCIATED KINASE"/>
    <property type="match status" value="1"/>
</dbReference>
<dbReference type="PANTHER" id="PTHR24346">
    <property type="entry name" value="MAP/MICROTUBULE AFFINITY-REGULATING KINASE"/>
    <property type="match status" value="1"/>
</dbReference>
<dbReference type="Pfam" id="PF00069">
    <property type="entry name" value="Pkinase"/>
    <property type="match status" value="1"/>
</dbReference>
<dbReference type="SMART" id="SM00220">
    <property type="entry name" value="S_TKc"/>
    <property type="match status" value="1"/>
</dbReference>
<dbReference type="SUPFAM" id="SSF56112">
    <property type="entry name" value="Protein kinase-like (PK-like)"/>
    <property type="match status" value="1"/>
</dbReference>
<dbReference type="PROSITE" id="PS00107">
    <property type="entry name" value="PROTEIN_KINASE_ATP"/>
    <property type="match status" value="1"/>
</dbReference>
<dbReference type="PROSITE" id="PS50011">
    <property type="entry name" value="PROTEIN_KINASE_DOM"/>
    <property type="match status" value="1"/>
</dbReference>
<dbReference type="PROSITE" id="PS00108">
    <property type="entry name" value="PROTEIN_KINASE_ST"/>
    <property type="match status" value="1"/>
</dbReference>
<keyword id="KW-0067">ATP-binding</keyword>
<keyword id="KW-0418">Kinase</keyword>
<keyword id="KW-0547">Nucleotide-binding</keyword>
<keyword id="KW-1185">Reference proteome</keyword>
<keyword id="KW-0723">Serine/threonine-protein kinase</keyword>
<keyword id="KW-0808">Transferase</keyword>
<name>HUNK_MOUSE</name>
<gene>
    <name type="primary">Hunk</name>
    <name type="synonym">Makv</name>
</gene>
<proteinExistence type="evidence at transcript level"/>
<organism>
    <name type="scientific">Mus musculus</name>
    <name type="common">Mouse</name>
    <dbReference type="NCBI Taxonomy" id="10090"/>
    <lineage>
        <taxon>Eukaryota</taxon>
        <taxon>Metazoa</taxon>
        <taxon>Chordata</taxon>
        <taxon>Craniata</taxon>
        <taxon>Vertebrata</taxon>
        <taxon>Euteleostomi</taxon>
        <taxon>Mammalia</taxon>
        <taxon>Eutheria</taxon>
        <taxon>Euarchontoglires</taxon>
        <taxon>Glires</taxon>
        <taxon>Rodentia</taxon>
        <taxon>Myomorpha</taxon>
        <taxon>Muroidea</taxon>
        <taxon>Muridae</taxon>
        <taxon>Murinae</taxon>
        <taxon>Mus</taxon>
        <taxon>Mus</taxon>
    </lineage>
</organism>
<feature type="chain" id="PRO_0000086005" description="Hormonally up-regulated neu tumor-associated kinase">
    <location>
        <begin position="1"/>
        <end position="714"/>
    </location>
</feature>
<feature type="domain" description="Protein kinase" evidence="1">
    <location>
        <begin position="62"/>
        <end position="320"/>
    </location>
</feature>
<feature type="region of interest" description="Disordered" evidence="3">
    <location>
        <begin position="1"/>
        <end position="28"/>
    </location>
</feature>
<feature type="region of interest" description="Disordered" evidence="3">
    <location>
        <begin position="624"/>
        <end position="658"/>
    </location>
</feature>
<feature type="region of interest" description="Disordered" evidence="3">
    <location>
        <begin position="674"/>
        <end position="714"/>
    </location>
</feature>
<feature type="compositionally biased region" description="Low complexity" evidence="3">
    <location>
        <begin position="1"/>
        <end position="16"/>
    </location>
</feature>
<feature type="compositionally biased region" description="Basic and acidic residues" evidence="3">
    <location>
        <begin position="624"/>
        <end position="635"/>
    </location>
</feature>
<feature type="compositionally biased region" description="Polar residues" evidence="3">
    <location>
        <begin position="692"/>
        <end position="703"/>
    </location>
</feature>
<feature type="active site" description="Proton acceptor" evidence="1 2">
    <location>
        <position position="186"/>
    </location>
</feature>
<feature type="binding site" evidence="1">
    <location>
        <begin position="68"/>
        <end position="76"/>
    </location>
    <ligand>
        <name>ATP</name>
        <dbReference type="ChEBI" id="CHEBI:30616"/>
    </ligand>
</feature>
<feature type="binding site" evidence="1">
    <location>
        <position position="91"/>
    </location>
    <ligand>
        <name>ATP</name>
        <dbReference type="ChEBI" id="CHEBI:30616"/>
    </ligand>
</feature>
<feature type="sequence conflict" description="In Ref. 2; AAF35282." evidence="4" ref="2">
    <original>T</original>
    <variation>I</variation>
    <location>
        <position position="697"/>
    </location>
</feature>
<reference key="1">
    <citation type="journal article" date="1997" name="Dokl. Akad. Nauk">
        <title>Identification of the new protein kinase specifically transcribed in mouse tumors with high metastatic potential.</title>
        <authorList>
            <person name="Korobko I.V."/>
            <person name="Kabishev A.A."/>
            <person name="Kiselev S.L."/>
        </authorList>
    </citation>
    <scope>NUCLEOTIDE SEQUENCE [MRNA]</scope>
    <source>
        <strain>A/Sn</strain>
        <tissue>Mammary gland</tissue>
    </source>
</reference>
<reference key="2">
    <citation type="journal article" date="2000" name="Genomics">
        <title>Cloning and characterization of Hunk, a novel mammalian SNF1-related protein kinase.</title>
        <authorList>
            <person name="Gardner H.P."/>
            <person name="Wertheim G.B.W."/>
            <person name="Ha S.I."/>
            <person name="Copeland N.G."/>
            <person name="Gilbert D.J."/>
            <person name="Jenkins N.A."/>
            <person name="Marquis S.T."/>
            <person name="Chodosh L.A."/>
        </authorList>
    </citation>
    <scope>NUCLEOTIDE SEQUENCE [MRNA]</scope>
    <source>
        <strain>FVB/NJ</strain>
        <tissue>Mammary gland</tissue>
    </source>
</reference>